<dbReference type="EMBL" id="BC157452">
    <property type="protein sequence ID" value="AAI57453.1"/>
    <property type="status" value="ALT_INIT"/>
    <property type="molecule type" value="mRNA"/>
</dbReference>
<dbReference type="RefSeq" id="NP_001108268.1">
    <property type="nucleotide sequence ID" value="NM_001114796.1"/>
</dbReference>
<dbReference type="SMR" id="A9ULY7"/>
<dbReference type="BioGRID" id="932507">
    <property type="interactions" value="1"/>
</dbReference>
<dbReference type="IntAct" id="A9ULY7">
    <property type="interactions" value="1"/>
</dbReference>
<dbReference type="GeneID" id="100137649"/>
<dbReference type="KEGG" id="xla:100137649"/>
<dbReference type="AGR" id="Xenbase:XB-GENE-999094"/>
<dbReference type="CTD" id="100137649"/>
<dbReference type="OMA" id="VHAHDQD"/>
<dbReference type="OrthoDB" id="423881at2759"/>
<dbReference type="Proteomes" id="UP000186698">
    <property type="component" value="Chromosome 2S"/>
</dbReference>
<dbReference type="Bgee" id="100137649">
    <property type="expression patterns" value="Expressed in gastrula and 19 other cell types or tissues"/>
</dbReference>
<dbReference type="GO" id="GO:0036064">
    <property type="term" value="C:ciliary basal body"/>
    <property type="evidence" value="ECO:0000250"/>
    <property type="project" value="UniProtKB"/>
</dbReference>
<dbReference type="GO" id="GO:0005929">
    <property type="term" value="C:cilium"/>
    <property type="evidence" value="ECO:0000318"/>
    <property type="project" value="GO_Central"/>
</dbReference>
<dbReference type="GO" id="GO:0005794">
    <property type="term" value="C:Golgi apparatus"/>
    <property type="evidence" value="ECO:0000318"/>
    <property type="project" value="GO_Central"/>
</dbReference>
<dbReference type="GO" id="GO:0030992">
    <property type="term" value="C:intraciliary transport particle B"/>
    <property type="evidence" value="ECO:0000250"/>
    <property type="project" value="UniProtKB"/>
</dbReference>
<dbReference type="GO" id="GO:0005815">
    <property type="term" value="C:microtubule organizing center"/>
    <property type="evidence" value="ECO:0000318"/>
    <property type="project" value="GO_Central"/>
</dbReference>
<dbReference type="GO" id="GO:0006915">
    <property type="term" value="P:apoptotic process"/>
    <property type="evidence" value="ECO:0000250"/>
    <property type="project" value="UniProtKB"/>
</dbReference>
<dbReference type="GO" id="GO:0042073">
    <property type="term" value="P:intraciliary transport"/>
    <property type="evidence" value="ECO:0000318"/>
    <property type="project" value="GO_Central"/>
</dbReference>
<dbReference type="GO" id="GO:1905515">
    <property type="term" value="P:non-motile cilium assembly"/>
    <property type="evidence" value="ECO:0000318"/>
    <property type="project" value="GO_Central"/>
</dbReference>
<dbReference type="GO" id="GO:0042981">
    <property type="term" value="P:regulation of apoptotic process"/>
    <property type="evidence" value="ECO:0000250"/>
    <property type="project" value="UniProtKB"/>
</dbReference>
<dbReference type="InterPro" id="IPR007110">
    <property type="entry name" value="Ig-like_dom"/>
</dbReference>
<dbReference type="InterPro" id="IPR019530">
    <property type="entry name" value="Intra-flagellar_transport_57"/>
</dbReference>
<dbReference type="PANTHER" id="PTHR16011">
    <property type="entry name" value="IFT57/HIPPI"/>
    <property type="match status" value="1"/>
</dbReference>
<dbReference type="PANTHER" id="PTHR16011:SF0">
    <property type="entry name" value="INTRAFLAGELLAR TRANSPORT PROTEIN 57 HOMOLOG"/>
    <property type="match status" value="1"/>
</dbReference>
<dbReference type="Pfam" id="PF10498">
    <property type="entry name" value="IFT57"/>
    <property type="match status" value="1"/>
</dbReference>
<organism>
    <name type="scientific">Xenopus laevis</name>
    <name type="common">African clawed frog</name>
    <dbReference type="NCBI Taxonomy" id="8355"/>
    <lineage>
        <taxon>Eukaryota</taxon>
        <taxon>Metazoa</taxon>
        <taxon>Chordata</taxon>
        <taxon>Craniata</taxon>
        <taxon>Vertebrata</taxon>
        <taxon>Euteleostomi</taxon>
        <taxon>Amphibia</taxon>
        <taxon>Batrachia</taxon>
        <taxon>Anura</taxon>
        <taxon>Pipoidea</taxon>
        <taxon>Pipidae</taxon>
        <taxon>Xenopodinae</taxon>
        <taxon>Xenopus</taxon>
        <taxon>Xenopus</taxon>
    </lineage>
</organism>
<accession>A9ULY7</accession>
<evidence type="ECO:0000250" key="1"/>
<evidence type="ECO:0000255" key="2"/>
<evidence type="ECO:0000305" key="3"/>
<reference key="1">
    <citation type="submission" date="2007-12" db="EMBL/GenBank/DDBJ databases">
        <authorList>
            <consortium name="NIH - Xenopus Gene Collection (XGC) project"/>
        </authorList>
    </citation>
    <scope>NUCLEOTIDE SEQUENCE [LARGE SCALE MRNA]</scope>
    <source>
        <tissue>Ovary</tissue>
    </source>
</reference>
<keyword id="KW-0053">Apoptosis</keyword>
<keyword id="KW-0966">Cell projection</keyword>
<keyword id="KW-0969">Cilium</keyword>
<keyword id="KW-0175">Coiled coil</keyword>
<keyword id="KW-0963">Cytoplasm</keyword>
<keyword id="KW-0206">Cytoskeleton</keyword>
<keyword id="KW-1185">Reference proteome</keyword>
<name>IFT57_XENLA</name>
<comment type="function">
    <text evidence="1">Required for the formation of cilia. May also have pro-apoptotic function (By similarity).</text>
</comment>
<comment type="subcellular location">
    <subcellularLocation>
        <location evidence="1">Cytoplasm</location>
        <location evidence="1">Cytoskeleton</location>
        <location evidence="1">Cilium basal body</location>
    </subcellularLocation>
</comment>
<comment type="similarity">
    <text evidence="3">Belongs to the IFT57 family.</text>
</comment>
<comment type="sequence caution" evidence="3">
    <conflict type="erroneous initiation">
        <sequence resource="EMBL-CDS" id="AAI57453"/>
    </conflict>
</comment>
<feature type="chain" id="PRO_0000328887" description="Intraflagellar transport protein 57 homolog">
    <location>
        <begin position="1"/>
        <end position="411"/>
    </location>
</feature>
<feature type="region of interest" description="pDED">
    <location>
        <begin position="317"/>
        <end position="408"/>
    </location>
</feature>
<feature type="coiled-coil region" evidence="2">
    <location>
        <begin position="261"/>
        <end position="351"/>
    </location>
</feature>
<protein>
    <recommendedName>
        <fullName>Intraflagellar transport protein 57 homolog</fullName>
    </recommendedName>
</protein>
<gene>
    <name type="primary">ift57</name>
</gene>
<sequence length="411" mass="47274">MSEDSRRAEDDDRGPGAAYQAFLMMEDLLDKLKLLSYEDEVLRKQNMKPLSRHYFALPTNPGEQFYMFCTLSAWLINKAGNNFDQPQEYDDPNATISNILSQLRSFGYSVDFPPSRLKAGYGEQVCYVLDCFAEEVLKHIRFSWKRPTYPTEEQDEETVVEDDAELTLNKIEDEIAEEDSDNDQEHFIDLKALSAQTQKLNAEESSKPEEILESNTDAAEWILEVERVLPQLKVTIRTDNKDWRVHVDQMHQHRDGIDTSLKETKGYLDKLHNEIAKALEKVSSREKYINNQLEQLVQEYRSAQAQLSEAKERYQQASGGVTERTRILAEITEELEKVKQEMEEKGSSMTDGAPLVKIKQALTKLKHEIVQMDIRTGVVEHTLLQSTLKEKSNMTRDMHALNIPDSSIGAY</sequence>
<proteinExistence type="evidence at transcript level"/>